<reference key="1">
    <citation type="journal article" date="1997" name="Nature">
        <title>Molecular basis of symbiosis between Rhizobium and legumes.</title>
        <authorList>
            <person name="Freiberg C.A."/>
            <person name="Fellay R."/>
            <person name="Bairoch A."/>
            <person name="Broughton W.J."/>
            <person name="Rosenthal A."/>
            <person name="Perret X."/>
        </authorList>
    </citation>
    <scope>NUCLEOTIDE SEQUENCE [LARGE SCALE GENOMIC DNA]</scope>
    <source>
        <strain>NBRC 101917 / NGR234</strain>
    </source>
</reference>
<reference key="2">
    <citation type="journal article" date="2009" name="Appl. Environ. Microbiol.">
        <title>Rhizobium sp. strain NGR234 possesses a remarkable number of secretion systems.</title>
        <authorList>
            <person name="Schmeisser C."/>
            <person name="Liesegang H."/>
            <person name="Krysciak D."/>
            <person name="Bakkou N."/>
            <person name="Le Quere A."/>
            <person name="Wollherr A."/>
            <person name="Heinemeyer I."/>
            <person name="Morgenstern B."/>
            <person name="Pommerening-Roeser A."/>
            <person name="Flores M."/>
            <person name="Palacios R."/>
            <person name="Brenner S."/>
            <person name="Gottschalk G."/>
            <person name="Schmitz R.A."/>
            <person name="Broughton W.J."/>
            <person name="Perret X."/>
            <person name="Strittmatter A.W."/>
            <person name="Streit W.R."/>
        </authorList>
    </citation>
    <scope>NUCLEOTIDE SEQUENCE [LARGE SCALE GENOMIC DNA]</scope>
    <source>
        <strain>NBRC 101917 / NGR234</strain>
    </source>
</reference>
<accession>P55518</accession>
<keyword id="KW-0597">Phosphoprotein</keyword>
<keyword id="KW-0614">Plasmid</keyword>
<keyword id="KW-1185">Reference proteome</keyword>
<keyword id="KW-0902">Two-component regulatory system</keyword>
<proteinExistence type="inferred from homology"/>
<gene>
    <name type="ordered locus">NGR_a02970</name>
    <name type="ORF">y4jR</name>
</gene>
<sequence length="151" mass="17262">MKTLIVEDNPKKRASLVEYYSSEFPSDDLEVTSALISGLRVARDTKPEFIILDMTLPNYSPDENKGSRIELMPFAGREFVMRVNRMSIKTKVIIVSMFETFGVAPRLITLNSLDAELRDRYPNVFVEAVHYSQAQADWKTAIKNARLSLDR</sequence>
<dbReference type="EMBL" id="U00090">
    <property type="protein sequence ID" value="AAB91730.1"/>
    <property type="molecule type" value="Genomic_DNA"/>
</dbReference>
<dbReference type="PIR" id="T28645">
    <property type="entry name" value="T28645"/>
</dbReference>
<dbReference type="RefSeq" id="NP_443928.1">
    <property type="nucleotide sequence ID" value="NC_000914.2"/>
</dbReference>
<dbReference type="RefSeq" id="WP_010875320.1">
    <property type="nucleotide sequence ID" value="NC_000914.2"/>
</dbReference>
<dbReference type="SMR" id="P55518"/>
<dbReference type="KEGG" id="rhi:NGR_a02970"/>
<dbReference type="eggNOG" id="COG0745">
    <property type="taxonomic scope" value="Bacteria"/>
</dbReference>
<dbReference type="HOGENOM" id="CLU_138528_0_0_5"/>
<dbReference type="OrthoDB" id="5405146at2"/>
<dbReference type="Proteomes" id="UP000001054">
    <property type="component" value="Plasmid pNGR234a"/>
</dbReference>
<dbReference type="GO" id="GO:0000160">
    <property type="term" value="P:phosphorelay signal transduction system"/>
    <property type="evidence" value="ECO:0007669"/>
    <property type="project" value="UniProtKB-KW"/>
</dbReference>
<dbReference type="Gene3D" id="3.40.50.2300">
    <property type="match status" value="1"/>
</dbReference>
<dbReference type="InterPro" id="IPR011006">
    <property type="entry name" value="CheY-like_superfamily"/>
</dbReference>
<dbReference type="InterPro" id="IPR001789">
    <property type="entry name" value="Sig_transdc_resp-reg_receiver"/>
</dbReference>
<dbReference type="SMART" id="SM00448">
    <property type="entry name" value="REC"/>
    <property type="match status" value="1"/>
</dbReference>
<dbReference type="SUPFAM" id="SSF52172">
    <property type="entry name" value="CheY-like"/>
    <property type="match status" value="1"/>
</dbReference>
<dbReference type="PROSITE" id="PS50110">
    <property type="entry name" value="RESPONSE_REGULATORY"/>
    <property type="match status" value="1"/>
</dbReference>
<feature type="chain" id="PRO_0000081400" description="Uncharacterized protein y4jR">
    <location>
        <begin position="1"/>
        <end position="151"/>
    </location>
</feature>
<feature type="domain" description="Response regulatory" evidence="1">
    <location>
        <begin position="2"/>
        <end position="133"/>
    </location>
</feature>
<feature type="modified residue" description="4-aspartylphosphate" evidence="1">
    <location>
        <position position="53"/>
    </location>
</feature>
<protein>
    <recommendedName>
        <fullName>Uncharacterized protein y4jR</fullName>
    </recommendedName>
</protein>
<geneLocation type="plasmid">
    <name>sym pNGR234a</name>
</geneLocation>
<evidence type="ECO:0000255" key="1">
    <source>
        <dbReference type="PROSITE-ProRule" id="PRU00169"/>
    </source>
</evidence>
<name>Y4JR_SINFN</name>
<organism>
    <name type="scientific">Sinorhizobium fredii (strain NBRC 101917 / NGR234)</name>
    <dbReference type="NCBI Taxonomy" id="394"/>
    <lineage>
        <taxon>Bacteria</taxon>
        <taxon>Pseudomonadati</taxon>
        <taxon>Pseudomonadota</taxon>
        <taxon>Alphaproteobacteria</taxon>
        <taxon>Hyphomicrobiales</taxon>
        <taxon>Rhizobiaceae</taxon>
        <taxon>Sinorhizobium/Ensifer group</taxon>
        <taxon>Sinorhizobium</taxon>
    </lineage>
</organism>